<keyword id="KW-0150">Chloroplast</keyword>
<keyword id="KW-0934">Plastid</keyword>
<keyword id="KW-0687">Ribonucleoprotein</keyword>
<keyword id="KW-0689">Ribosomal protein</keyword>
<proteinExistence type="inferred from homology"/>
<evidence type="ECO:0000250" key="1"/>
<evidence type="ECO:0000305" key="2"/>
<protein>
    <recommendedName>
        <fullName evidence="2">Small ribosomal subunit protein uS15c</fullName>
    </recommendedName>
    <alternativeName>
        <fullName>30S ribosomal protein S15, chloroplastic</fullName>
    </alternativeName>
</protein>
<name>RR15_ARAHI</name>
<comment type="subunit">
    <text evidence="1">Part of the 30S ribosomal subunit.</text>
</comment>
<comment type="subcellular location">
    <subcellularLocation>
        <location>Plastid</location>
        <location>Chloroplast</location>
    </subcellularLocation>
</comment>
<comment type="similarity">
    <text evidence="2">Belongs to the universal ribosomal protein uS15 family.</text>
</comment>
<accession>A4QK77</accession>
<dbReference type="EMBL" id="AP009369">
    <property type="protein sequence ID" value="BAF50082.1"/>
    <property type="molecule type" value="Genomic_DNA"/>
</dbReference>
<dbReference type="RefSeq" id="YP_001123257.1">
    <property type="nucleotide sequence ID" value="NC_009268.1"/>
</dbReference>
<dbReference type="SMR" id="A4QK77"/>
<dbReference type="GeneID" id="4962601"/>
<dbReference type="GO" id="GO:0009507">
    <property type="term" value="C:chloroplast"/>
    <property type="evidence" value="ECO:0007669"/>
    <property type="project" value="UniProtKB-SubCell"/>
</dbReference>
<dbReference type="GO" id="GO:1990904">
    <property type="term" value="C:ribonucleoprotein complex"/>
    <property type="evidence" value="ECO:0007669"/>
    <property type="project" value="UniProtKB-KW"/>
</dbReference>
<dbReference type="GO" id="GO:0005840">
    <property type="term" value="C:ribosome"/>
    <property type="evidence" value="ECO:0007669"/>
    <property type="project" value="UniProtKB-KW"/>
</dbReference>
<dbReference type="GO" id="GO:0003735">
    <property type="term" value="F:structural constituent of ribosome"/>
    <property type="evidence" value="ECO:0007669"/>
    <property type="project" value="InterPro"/>
</dbReference>
<dbReference type="GO" id="GO:0006412">
    <property type="term" value="P:translation"/>
    <property type="evidence" value="ECO:0007669"/>
    <property type="project" value="UniProtKB-UniRule"/>
</dbReference>
<dbReference type="CDD" id="cd00353">
    <property type="entry name" value="Ribosomal_S15p_S13e"/>
    <property type="match status" value="1"/>
</dbReference>
<dbReference type="FunFam" id="1.10.287.10:FF:000011">
    <property type="entry name" value="30S ribosomal protein S15, chloroplastic"/>
    <property type="match status" value="1"/>
</dbReference>
<dbReference type="Gene3D" id="1.10.287.10">
    <property type="entry name" value="S15/NS1, RNA-binding"/>
    <property type="match status" value="1"/>
</dbReference>
<dbReference type="HAMAP" id="MF_01343_B">
    <property type="entry name" value="Ribosomal_uS15_B"/>
    <property type="match status" value="1"/>
</dbReference>
<dbReference type="InterPro" id="IPR000589">
    <property type="entry name" value="Ribosomal_uS15"/>
</dbReference>
<dbReference type="InterPro" id="IPR005290">
    <property type="entry name" value="Ribosomal_uS15_bac-type"/>
</dbReference>
<dbReference type="InterPro" id="IPR009068">
    <property type="entry name" value="uS15_NS1_RNA-bd_sf"/>
</dbReference>
<dbReference type="NCBIfam" id="TIGR00952">
    <property type="entry name" value="S15_bact"/>
    <property type="match status" value="1"/>
</dbReference>
<dbReference type="PANTHER" id="PTHR23321">
    <property type="entry name" value="RIBOSOMAL PROTEIN S15, BACTERIAL AND ORGANELLAR"/>
    <property type="match status" value="1"/>
</dbReference>
<dbReference type="PANTHER" id="PTHR23321:SF26">
    <property type="entry name" value="SMALL RIBOSOMAL SUBUNIT PROTEIN US15M"/>
    <property type="match status" value="1"/>
</dbReference>
<dbReference type="Pfam" id="PF00312">
    <property type="entry name" value="Ribosomal_S15"/>
    <property type="match status" value="1"/>
</dbReference>
<dbReference type="SMART" id="SM01387">
    <property type="entry name" value="Ribosomal_S15"/>
    <property type="match status" value="1"/>
</dbReference>
<dbReference type="SUPFAM" id="SSF47060">
    <property type="entry name" value="S15/NS1 RNA-binding domain"/>
    <property type="match status" value="1"/>
</dbReference>
<dbReference type="PROSITE" id="PS00362">
    <property type="entry name" value="RIBOSOMAL_S15"/>
    <property type="match status" value="1"/>
</dbReference>
<gene>
    <name type="primary">rps15</name>
</gene>
<organism>
    <name type="scientific">Arabis hirsuta</name>
    <name type="common">Hairy rock-cress</name>
    <name type="synonym">Turritis hirsuta</name>
    <dbReference type="NCBI Taxonomy" id="78191"/>
    <lineage>
        <taxon>Eukaryota</taxon>
        <taxon>Viridiplantae</taxon>
        <taxon>Streptophyta</taxon>
        <taxon>Embryophyta</taxon>
        <taxon>Tracheophyta</taxon>
        <taxon>Spermatophyta</taxon>
        <taxon>Magnoliopsida</taxon>
        <taxon>eudicotyledons</taxon>
        <taxon>Gunneridae</taxon>
        <taxon>Pentapetalae</taxon>
        <taxon>rosids</taxon>
        <taxon>malvids</taxon>
        <taxon>Brassicales</taxon>
        <taxon>Brassicaceae</taxon>
        <taxon>Arabideae</taxon>
        <taxon>Arabis</taxon>
    </lineage>
</organism>
<reference key="1">
    <citation type="submission" date="2007-03" db="EMBL/GenBank/DDBJ databases">
        <title>Sequencing analysis of Arabis hirsuta chloroplast DNA.</title>
        <authorList>
            <person name="Hosouchi T."/>
            <person name="Tsuruoka H."/>
            <person name="Kotani H."/>
        </authorList>
    </citation>
    <scope>NUCLEOTIDE SEQUENCE [LARGE SCALE GENOMIC DNA]</scope>
</reference>
<geneLocation type="chloroplast"/>
<feature type="chain" id="PRO_0000354237" description="Small ribosomal subunit protein uS15c">
    <location>
        <begin position="1"/>
        <end position="88"/>
    </location>
</feature>
<sequence>MIKNAFISFQEKKEENRGSVEFQVLSFTNKIRRLTSHLELHRKDFLSQRGLRKILGKRQRLLAYLSKKNRVRYKELINQLNIRELKTR</sequence>